<sequence>MAAAVLLAVGLRAARRTLAAAGARGAQVRGNAGVSDGSEVAKAQKAAPGGASPTIFSRILDRSLPADILYEDQQCLVFRDVAPQAPVHFLVIPRKPIPRISQAEEDDQQLLGHLLLVAKKIAQAQGLKDGYRLVVNDGKMGAQSVYHLHIHVLGGRQLQWPPG</sequence>
<gene>
    <name evidence="6" type="primary">Hint2</name>
</gene>
<name>HINT2_MOUSE</name>
<keyword id="KW-0007">Acetylation</keyword>
<keyword id="KW-0053">Apoptosis</keyword>
<keyword id="KW-0378">Hydrolase</keyword>
<keyword id="KW-0444">Lipid biosynthesis</keyword>
<keyword id="KW-0443">Lipid metabolism</keyword>
<keyword id="KW-0496">Mitochondrion</keyword>
<keyword id="KW-0547">Nucleotide-binding</keyword>
<keyword id="KW-1185">Reference proteome</keyword>
<keyword id="KW-0752">Steroid biosynthesis</keyword>
<keyword id="KW-0809">Transit peptide</keyword>
<dbReference type="EC" id="3.9.1.-" evidence="2"/>
<dbReference type="EMBL" id="AF356874">
    <property type="protein sequence ID" value="AAM00220.1"/>
    <property type="molecule type" value="mRNA"/>
</dbReference>
<dbReference type="EMBL" id="AY040765">
    <property type="protein sequence ID" value="AAK94774.1"/>
    <property type="molecule type" value="Genomic_DNA"/>
</dbReference>
<dbReference type="EMBL" id="AK004497">
    <property type="protein sequence ID" value="BAB23334.1"/>
    <property type="molecule type" value="mRNA"/>
</dbReference>
<dbReference type="CCDS" id="CCDS18106.1"/>
<dbReference type="RefSeq" id="NP_081147.1">
    <property type="nucleotide sequence ID" value="NM_026871.1"/>
</dbReference>
<dbReference type="SMR" id="Q9D0S9"/>
<dbReference type="BioGRID" id="213113">
    <property type="interactions" value="5"/>
</dbReference>
<dbReference type="FunCoup" id="Q9D0S9">
    <property type="interactions" value="1728"/>
</dbReference>
<dbReference type="IntAct" id="Q9D0S9">
    <property type="interactions" value="1"/>
</dbReference>
<dbReference type="STRING" id="10090.ENSMUSP00000030192"/>
<dbReference type="GlyGen" id="Q9D0S9">
    <property type="glycosylation" value="1 site, 1 O-linked glycan (1 site)"/>
</dbReference>
<dbReference type="iPTMnet" id="Q9D0S9"/>
<dbReference type="PhosphoSitePlus" id="Q9D0S9"/>
<dbReference type="SwissPalm" id="Q9D0S9"/>
<dbReference type="jPOST" id="Q9D0S9"/>
<dbReference type="PaxDb" id="10090-ENSMUSP00000030192"/>
<dbReference type="ProteomicsDB" id="273111"/>
<dbReference type="Pumba" id="Q9D0S9"/>
<dbReference type="Antibodypedia" id="11787">
    <property type="antibodies" value="130 antibodies from 19 providers"/>
</dbReference>
<dbReference type="DNASU" id="68917"/>
<dbReference type="Ensembl" id="ENSMUST00000030192.5">
    <property type="protein sequence ID" value="ENSMUSP00000030192.5"/>
    <property type="gene ID" value="ENSMUSG00000028470.11"/>
</dbReference>
<dbReference type="GeneID" id="68917"/>
<dbReference type="KEGG" id="mmu:68917"/>
<dbReference type="UCSC" id="uc008sqs.1">
    <property type="organism name" value="mouse"/>
</dbReference>
<dbReference type="AGR" id="MGI:1916167"/>
<dbReference type="CTD" id="84681"/>
<dbReference type="MGI" id="MGI:1916167">
    <property type="gene designation" value="Hint2"/>
</dbReference>
<dbReference type="VEuPathDB" id="HostDB:ENSMUSG00000028470"/>
<dbReference type="eggNOG" id="KOG3275">
    <property type="taxonomic scope" value="Eukaryota"/>
</dbReference>
<dbReference type="GeneTree" id="ENSGT00940000157905"/>
<dbReference type="HOGENOM" id="CLU_056776_8_0_1"/>
<dbReference type="InParanoid" id="Q9D0S9"/>
<dbReference type="OMA" id="YRVVMNC"/>
<dbReference type="OrthoDB" id="75719at9989"/>
<dbReference type="PhylomeDB" id="Q9D0S9"/>
<dbReference type="TreeFam" id="TF314862"/>
<dbReference type="Reactome" id="R-MMU-9013405">
    <property type="pathway name" value="RHOD GTPase cycle"/>
</dbReference>
<dbReference type="BioGRID-ORCS" id="68917">
    <property type="hits" value="4 hits in 78 CRISPR screens"/>
</dbReference>
<dbReference type="ChiTaRS" id="Hint2">
    <property type="organism name" value="mouse"/>
</dbReference>
<dbReference type="PRO" id="PR:Q9D0S9"/>
<dbReference type="Proteomes" id="UP000000589">
    <property type="component" value="Chromosome 4"/>
</dbReference>
<dbReference type="RNAct" id="Q9D0S9">
    <property type="molecule type" value="protein"/>
</dbReference>
<dbReference type="Bgee" id="ENSMUSG00000028470">
    <property type="expression patterns" value="Expressed in right kidney and 261 other cell types or tissues"/>
</dbReference>
<dbReference type="ExpressionAtlas" id="Q9D0S9">
    <property type="expression patterns" value="baseline and differential"/>
</dbReference>
<dbReference type="GO" id="GO:0005759">
    <property type="term" value="C:mitochondrial matrix"/>
    <property type="evidence" value="ECO:0000314"/>
    <property type="project" value="FlyBase"/>
</dbReference>
<dbReference type="GO" id="GO:0005739">
    <property type="term" value="C:mitochondrion"/>
    <property type="evidence" value="ECO:0000314"/>
    <property type="project" value="UniProtKB"/>
</dbReference>
<dbReference type="GO" id="GO:0043530">
    <property type="term" value="F:adenosine 5'-monophosphoramidase activity"/>
    <property type="evidence" value="ECO:0000250"/>
    <property type="project" value="UniProtKB"/>
</dbReference>
<dbReference type="GO" id="GO:0000166">
    <property type="term" value="F:nucleotide binding"/>
    <property type="evidence" value="ECO:0007669"/>
    <property type="project" value="UniProtKB-KW"/>
</dbReference>
<dbReference type="GO" id="GO:0006915">
    <property type="term" value="P:apoptotic process"/>
    <property type="evidence" value="ECO:0007669"/>
    <property type="project" value="UniProtKB-KW"/>
</dbReference>
<dbReference type="GO" id="GO:0016042">
    <property type="term" value="P:lipid catabolic process"/>
    <property type="evidence" value="ECO:0000315"/>
    <property type="project" value="MGI"/>
</dbReference>
<dbReference type="GO" id="GO:0006694">
    <property type="term" value="P:steroid biosynthetic process"/>
    <property type="evidence" value="ECO:0007669"/>
    <property type="project" value="UniProtKB-KW"/>
</dbReference>
<dbReference type="CDD" id="cd01276">
    <property type="entry name" value="PKCI_related"/>
    <property type="match status" value="1"/>
</dbReference>
<dbReference type="FunFam" id="3.30.428.10:FF:000005">
    <property type="entry name" value="Histidine triad nucleotide-binding protein 1"/>
    <property type="match status" value="1"/>
</dbReference>
<dbReference type="Gene3D" id="3.30.428.10">
    <property type="entry name" value="HIT-like"/>
    <property type="match status" value="1"/>
</dbReference>
<dbReference type="InterPro" id="IPR019808">
    <property type="entry name" value="Histidine_triad_CS"/>
</dbReference>
<dbReference type="InterPro" id="IPR001310">
    <property type="entry name" value="Histidine_triad_HIT"/>
</dbReference>
<dbReference type="InterPro" id="IPR011146">
    <property type="entry name" value="HIT-like"/>
</dbReference>
<dbReference type="InterPro" id="IPR036265">
    <property type="entry name" value="HIT-like_sf"/>
</dbReference>
<dbReference type="PANTHER" id="PTHR23089">
    <property type="entry name" value="HISTIDINE TRIAD HIT PROTEIN"/>
    <property type="match status" value="1"/>
</dbReference>
<dbReference type="Pfam" id="PF01230">
    <property type="entry name" value="HIT"/>
    <property type="match status" value="1"/>
</dbReference>
<dbReference type="PRINTS" id="PR00332">
    <property type="entry name" value="HISTRIAD"/>
</dbReference>
<dbReference type="SUPFAM" id="SSF54197">
    <property type="entry name" value="HIT-like"/>
    <property type="match status" value="1"/>
</dbReference>
<dbReference type="PROSITE" id="PS00892">
    <property type="entry name" value="HIT_1"/>
    <property type="match status" value="1"/>
</dbReference>
<dbReference type="PROSITE" id="PS51084">
    <property type="entry name" value="HIT_2"/>
    <property type="match status" value="1"/>
</dbReference>
<accession>Q9D0S9</accession>
<evidence type="ECO:0000250" key="1"/>
<evidence type="ECO:0000250" key="2">
    <source>
        <dbReference type="UniProtKB" id="Q9BX68"/>
    </source>
</evidence>
<evidence type="ECO:0000255" key="3"/>
<evidence type="ECO:0000255" key="4">
    <source>
        <dbReference type="PROSITE-ProRule" id="PRU00464"/>
    </source>
</evidence>
<evidence type="ECO:0000305" key="5"/>
<evidence type="ECO:0000312" key="6">
    <source>
        <dbReference type="MGI" id="MGI:1916167"/>
    </source>
</evidence>
<evidence type="ECO:0007744" key="7">
    <source>
    </source>
</evidence>
<evidence type="ECO:0007744" key="8">
    <source>
    </source>
</evidence>
<reference key="1">
    <citation type="submission" date="2001-03" db="EMBL/GenBank/DDBJ databases">
        <title>HINT-3 is a novel member of the histidine triad protein family.</title>
        <authorList>
            <person name="Chen H."/>
            <person name="Peng J."/>
            <person name="Huang C.-H."/>
        </authorList>
    </citation>
    <scope>NUCLEOTIDE SEQUENCE [MRNA]</scope>
    <source>
        <strain>BALB/cJ</strain>
        <tissue>Kidney</tissue>
    </source>
</reference>
<reference key="2">
    <citation type="submission" date="2001-06" db="EMBL/GenBank/DDBJ databases">
        <title>Genomic organization of mouse histidine triad protein 3 (Hint-3) gene.</title>
        <authorList>
            <person name="Huang C.-H."/>
            <person name="Chen H."/>
            <person name="Peng J."/>
            <person name="Chen Y."/>
        </authorList>
    </citation>
    <scope>NUCLEOTIDE SEQUENCE [GENOMIC DNA]</scope>
    <source>
        <strain>BALB/cJ</strain>
    </source>
</reference>
<reference key="3">
    <citation type="journal article" date="2005" name="Science">
        <title>The transcriptional landscape of the mammalian genome.</title>
        <authorList>
            <person name="Carninci P."/>
            <person name="Kasukawa T."/>
            <person name="Katayama S."/>
            <person name="Gough J."/>
            <person name="Frith M.C."/>
            <person name="Maeda N."/>
            <person name="Oyama R."/>
            <person name="Ravasi T."/>
            <person name="Lenhard B."/>
            <person name="Wells C."/>
            <person name="Kodzius R."/>
            <person name="Shimokawa K."/>
            <person name="Bajic V.B."/>
            <person name="Brenner S.E."/>
            <person name="Batalov S."/>
            <person name="Forrest A.R."/>
            <person name="Zavolan M."/>
            <person name="Davis M.J."/>
            <person name="Wilming L.G."/>
            <person name="Aidinis V."/>
            <person name="Allen J.E."/>
            <person name="Ambesi-Impiombato A."/>
            <person name="Apweiler R."/>
            <person name="Aturaliya R.N."/>
            <person name="Bailey T.L."/>
            <person name="Bansal M."/>
            <person name="Baxter L."/>
            <person name="Beisel K.W."/>
            <person name="Bersano T."/>
            <person name="Bono H."/>
            <person name="Chalk A.M."/>
            <person name="Chiu K.P."/>
            <person name="Choudhary V."/>
            <person name="Christoffels A."/>
            <person name="Clutterbuck D.R."/>
            <person name="Crowe M.L."/>
            <person name="Dalla E."/>
            <person name="Dalrymple B.P."/>
            <person name="de Bono B."/>
            <person name="Della Gatta G."/>
            <person name="di Bernardo D."/>
            <person name="Down T."/>
            <person name="Engstrom P."/>
            <person name="Fagiolini M."/>
            <person name="Faulkner G."/>
            <person name="Fletcher C.F."/>
            <person name="Fukushima T."/>
            <person name="Furuno M."/>
            <person name="Futaki S."/>
            <person name="Gariboldi M."/>
            <person name="Georgii-Hemming P."/>
            <person name="Gingeras T.R."/>
            <person name="Gojobori T."/>
            <person name="Green R.E."/>
            <person name="Gustincich S."/>
            <person name="Harbers M."/>
            <person name="Hayashi Y."/>
            <person name="Hensch T.K."/>
            <person name="Hirokawa N."/>
            <person name="Hill D."/>
            <person name="Huminiecki L."/>
            <person name="Iacono M."/>
            <person name="Ikeo K."/>
            <person name="Iwama A."/>
            <person name="Ishikawa T."/>
            <person name="Jakt M."/>
            <person name="Kanapin A."/>
            <person name="Katoh M."/>
            <person name="Kawasawa Y."/>
            <person name="Kelso J."/>
            <person name="Kitamura H."/>
            <person name="Kitano H."/>
            <person name="Kollias G."/>
            <person name="Krishnan S.P."/>
            <person name="Kruger A."/>
            <person name="Kummerfeld S.K."/>
            <person name="Kurochkin I.V."/>
            <person name="Lareau L.F."/>
            <person name="Lazarevic D."/>
            <person name="Lipovich L."/>
            <person name="Liu J."/>
            <person name="Liuni S."/>
            <person name="McWilliam S."/>
            <person name="Madan Babu M."/>
            <person name="Madera M."/>
            <person name="Marchionni L."/>
            <person name="Matsuda H."/>
            <person name="Matsuzawa S."/>
            <person name="Miki H."/>
            <person name="Mignone F."/>
            <person name="Miyake S."/>
            <person name="Morris K."/>
            <person name="Mottagui-Tabar S."/>
            <person name="Mulder N."/>
            <person name="Nakano N."/>
            <person name="Nakauchi H."/>
            <person name="Ng P."/>
            <person name="Nilsson R."/>
            <person name="Nishiguchi S."/>
            <person name="Nishikawa S."/>
            <person name="Nori F."/>
            <person name="Ohara O."/>
            <person name="Okazaki Y."/>
            <person name="Orlando V."/>
            <person name="Pang K.C."/>
            <person name="Pavan W.J."/>
            <person name="Pavesi G."/>
            <person name="Pesole G."/>
            <person name="Petrovsky N."/>
            <person name="Piazza S."/>
            <person name="Reed J."/>
            <person name="Reid J.F."/>
            <person name="Ring B.Z."/>
            <person name="Ringwald M."/>
            <person name="Rost B."/>
            <person name="Ruan Y."/>
            <person name="Salzberg S.L."/>
            <person name="Sandelin A."/>
            <person name="Schneider C."/>
            <person name="Schoenbach C."/>
            <person name="Sekiguchi K."/>
            <person name="Semple C.A."/>
            <person name="Seno S."/>
            <person name="Sessa L."/>
            <person name="Sheng Y."/>
            <person name="Shibata Y."/>
            <person name="Shimada H."/>
            <person name="Shimada K."/>
            <person name="Silva D."/>
            <person name="Sinclair B."/>
            <person name="Sperling S."/>
            <person name="Stupka E."/>
            <person name="Sugiura K."/>
            <person name="Sultana R."/>
            <person name="Takenaka Y."/>
            <person name="Taki K."/>
            <person name="Tammoja K."/>
            <person name="Tan S.L."/>
            <person name="Tang S."/>
            <person name="Taylor M.S."/>
            <person name="Tegner J."/>
            <person name="Teichmann S.A."/>
            <person name="Ueda H.R."/>
            <person name="van Nimwegen E."/>
            <person name="Verardo R."/>
            <person name="Wei C.L."/>
            <person name="Yagi K."/>
            <person name="Yamanishi H."/>
            <person name="Zabarovsky E."/>
            <person name="Zhu S."/>
            <person name="Zimmer A."/>
            <person name="Hide W."/>
            <person name="Bult C."/>
            <person name="Grimmond S.M."/>
            <person name="Teasdale R.D."/>
            <person name="Liu E.T."/>
            <person name="Brusic V."/>
            <person name="Quackenbush J."/>
            <person name="Wahlestedt C."/>
            <person name="Mattick J.S."/>
            <person name="Hume D.A."/>
            <person name="Kai C."/>
            <person name="Sasaki D."/>
            <person name="Tomaru Y."/>
            <person name="Fukuda S."/>
            <person name="Kanamori-Katayama M."/>
            <person name="Suzuki M."/>
            <person name="Aoki J."/>
            <person name="Arakawa T."/>
            <person name="Iida J."/>
            <person name="Imamura K."/>
            <person name="Itoh M."/>
            <person name="Kato T."/>
            <person name="Kawaji H."/>
            <person name="Kawagashira N."/>
            <person name="Kawashima T."/>
            <person name="Kojima M."/>
            <person name="Kondo S."/>
            <person name="Konno H."/>
            <person name="Nakano K."/>
            <person name="Ninomiya N."/>
            <person name="Nishio T."/>
            <person name="Okada M."/>
            <person name="Plessy C."/>
            <person name="Shibata K."/>
            <person name="Shiraki T."/>
            <person name="Suzuki S."/>
            <person name="Tagami M."/>
            <person name="Waki K."/>
            <person name="Watahiki A."/>
            <person name="Okamura-Oho Y."/>
            <person name="Suzuki H."/>
            <person name="Kawai J."/>
            <person name="Hayashizaki Y."/>
        </authorList>
    </citation>
    <scope>NUCLEOTIDE SEQUENCE [LARGE SCALE MRNA]</scope>
    <source>
        <strain>C57BL/6J</strain>
    </source>
</reference>
<reference key="4">
    <citation type="journal article" date="2010" name="Cell">
        <title>A tissue-specific atlas of mouse protein phosphorylation and expression.</title>
        <authorList>
            <person name="Huttlin E.L."/>
            <person name="Jedrychowski M.P."/>
            <person name="Elias J.E."/>
            <person name="Goswami T."/>
            <person name="Rad R."/>
            <person name="Beausoleil S.A."/>
            <person name="Villen J."/>
            <person name="Haas W."/>
            <person name="Sowa M.E."/>
            <person name="Gygi S.P."/>
        </authorList>
    </citation>
    <scope>IDENTIFICATION BY MASS SPECTROMETRY [LARGE SCALE ANALYSIS]</scope>
    <source>
        <tissue>Brain</tissue>
        <tissue>Brown adipose tissue</tissue>
        <tissue>Heart</tissue>
        <tissue>Kidney</tissue>
        <tissue>Liver</tissue>
        <tissue>Lung</tissue>
        <tissue>Pancreas</tissue>
        <tissue>Spleen</tissue>
        <tissue>Testis</tissue>
    </source>
</reference>
<reference key="5">
    <citation type="journal article" date="2013" name="Mol. Cell">
        <title>SIRT5-mediated lysine desuccinylation impacts diverse metabolic pathways.</title>
        <authorList>
            <person name="Park J."/>
            <person name="Chen Y."/>
            <person name="Tishkoff D.X."/>
            <person name="Peng C."/>
            <person name="Tan M."/>
            <person name="Dai L."/>
            <person name="Xie Z."/>
            <person name="Zhang Y."/>
            <person name="Zwaans B.M."/>
            <person name="Skinner M.E."/>
            <person name="Lombard D.B."/>
            <person name="Zhao Y."/>
        </authorList>
    </citation>
    <scope>SUCCINYLATION [LARGE SCALE ANALYSIS] AT LYS-45 AND LYS-128</scope>
    <scope>IDENTIFICATION BY MASS SPECTROMETRY [LARGE SCALE ANALYSIS]</scope>
    <source>
        <tissue>Embryonic fibroblast</tissue>
        <tissue>Liver</tissue>
    </source>
</reference>
<reference key="6">
    <citation type="journal article" date="2013" name="Proc. Natl. Acad. Sci. U.S.A.">
        <title>Label-free quantitative proteomics of the lysine acetylome in mitochondria identifies substrates of SIRT3 in metabolic pathways.</title>
        <authorList>
            <person name="Rardin M.J."/>
            <person name="Newman J.C."/>
            <person name="Held J.M."/>
            <person name="Cusack M.P."/>
            <person name="Sorensen D.J."/>
            <person name="Li B."/>
            <person name="Schilling B."/>
            <person name="Mooney S.D."/>
            <person name="Kahn C.R."/>
            <person name="Verdin E."/>
            <person name="Gibson B.W."/>
        </authorList>
    </citation>
    <scope>ACETYLATION [LARGE SCALE ANALYSIS] AT LYS-119; LYS-128 AND LYS-139</scope>
    <scope>IDENTIFICATION BY MASS SPECTROMETRY [LARGE SCALE ANALYSIS]</scope>
    <source>
        <tissue>Liver</tissue>
    </source>
</reference>
<organism>
    <name type="scientific">Mus musculus</name>
    <name type="common">Mouse</name>
    <dbReference type="NCBI Taxonomy" id="10090"/>
    <lineage>
        <taxon>Eukaryota</taxon>
        <taxon>Metazoa</taxon>
        <taxon>Chordata</taxon>
        <taxon>Craniata</taxon>
        <taxon>Vertebrata</taxon>
        <taxon>Euteleostomi</taxon>
        <taxon>Mammalia</taxon>
        <taxon>Eutheria</taxon>
        <taxon>Euarchontoglires</taxon>
        <taxon>Glires</taxon>
        <taxon>Rodentia</taxon>
        <taxon>Myomorpha</taxon>
        <taxon>Muroidea</taxon>
        <taxon>Muridae</taxon>
        <taxon>Murinae</taxon>
        <taxon>Mus</taxon>
        <taxon>Mus</taxon>
    </lineage>
</organism>
<protein>
    <recommendedName>
        <fullName evidence="2">Adenosine 5'-monophosphoramidase HINT2</fullName>
        <ecNumber evidence="2">3.9.1.-</ecNumber>
    </recommendedName>
    <alternativeName>
        <fullName evidence="2">HINT-3</fullName>
    </alternativeName>
    <alternativeName>
        <fullName evidence="5">Histidine triad nucleotide-binding protein 2, mitochondrial</fullName>
        <shortName evidence="2">HINT-2</shortName>
    </alternativeName>
</protein>
<proteinExistence type="evidence at protein level"/>
<comment type="function">
    <text evidence="2">Exhibits adenosine 5'-monophosphoramidase activity, hydrolyzing purine nucleotide phosphoramidates with a single phosphate group such as adenosine 5'monophosphoramidate (AMP-NH2) to yield AMP and NH2 (By similarity). Hydrolyzes adenosine 5'-O-p-nitrophenylphosphoramidate (AMP-pNA) (By similarity). May be involved in steroid biosynthesis (By similarity). May play a role in apoptosis (By similarity).</text>
</comment>
<comment type="catalytic activity">
    <reaction evidence="2">
        <text>adenosine 5'-phosphoramidate + H2O = AMP + NH4(+)</text>
        <dbReference type="Rhea" id="RHEA:67916"/>
        <dbReference type="ChEBI" id="CHEBI:15377"/>
        <dbReference type="ChEBI" id="CHEBI:28938"/>
        <dbReference type="ChEBI" id="CHEBI:57890"/>
        <dbReference type="ChEBI" id="CHEBI:456215"/>
    </reaction>
</comment>
<comment type="subcellular location">
    <subcellularLocation>
        <location evidence="2">Mitochondrion</location>
    </subcellularLocation>
</comment>
<comment type="similarity">
    <text evidence="5">Belongs to the HINT family.</text>
</comment>
<feature type="transit peptide" description="Mitochondrion" evidence="3">
    <location>
        <begin position="1"/>
        <end position="17"/>
    </location>
</feature>
<feature type="chain" id="PRO_0000109787" description="Adenosine 5'-monophosphoramidase HINT2">
    <location>
        <begin position="18"/>
        <end position="163"/>
    </location>
</feature>
<feature type="domain" description="HIT" evidence="4">
    <location>
        <begin position="55"/>
        <end position="163"/>
    </location>
</feature>
<feature type="short sequence motif" description="Histidine triad motif">
    <location>
        <begin position="147"/>
        <end position="151"/>
    </location>
</feature>
<feature type="active site" description="Tele-AMP-histidine intermediate" evidence="1">
    <location>
        <position position="149"/>
    </location>
</feature>
<feature type="binding site" evidence="2">
    <location>
        <position position="63"/>
    </location>
    <ligand>
        <name>AMP</name>
        <dbReference type="ChEBI" id="CHEBI:456215"/>
    </ligand>
</feature>
<feature type="binding site" evidence="2">
    <location>
        <position position="80"/>
    </location>
    <ligand>
        <name>AMP</name>
        <dbReference type="ChEBI" id="CHEBI:456215"/>
    </ligand>
</feature>
<feature type="binding site" evidence="2">
    <location>
        <position position="136"/>
    </location>
    <ligand>
        <name>AMP</name>
        <dbReference type="ChEBI" id="CHEBI:456215"/>
    </ligand>
</feature>
<feature type="binding site" evidence="2">
    <location>
        <begin position="142"/>
        <end position="145"/>
    </location>
    <ligand>
        <name>AMP</name>
        <dbReference type="ChEBI" id="CHEBI:456215"/>
    </ligand>
</feature>
<feature type="binding site" evidence="2">
    <location>
        <begin position="149"/>
        <end position="151"/>
    </location>
    <ligand>
        <name>AMP</name>
        <dbReference type="ChEBI" id="CHEBI:456215"/>
    </ligand>
</feature>
<feature type="modified residue" description="N6-succinyllysine" evidence="8">
    <location>
        <position position="45"/>
    </location>
</feature>
<feature type="modified residue" description="N6-acetyllysine" evidence="7">
    <location>
        <position position="119"/>
    </location>
</feature>
<feature type="modified residue" description="N6-acetyllysine; alternate" evidence="7">
    <location>
        <position position="128"/>
    </location>
</feature>
<feature type="modified residue" description="N6-succinyllysine; alternate" evidence="8">
    <location>
        <position position="128"/>
    </location>
</feature>
<feature type="modified residue" description="N6-acetyllysine" evidence="7">
    <location>
        <position position="139"/>
    </location>
</feature>